<name>SIMA_DROME</name>
<protein>
    <recommendedName>
        <fullName>Protein similar</fullName>
    </recommendedName>
</protein>
<reference key="1">
    <citation type="journal article" date="1996" name="Gene">
        <title>The Drosophila melanogaster similar bHLH-PAS gene encodes a protein related to human hypoxia-inducible factor 1 alpha and Drosophila single-minded.</title>
        <authorList>
            <person name="Nambu J.R."/>
            <person name="Chen W."/>
            <person name="Hu S."/>
            <person name="Crews S.T."/>
        </authorList>
    </citation>
    <scope>NUCLEOTIDE SEQUENCE [MRNA]</scope>
    <scope>TISSUE SPECIFICITY</scope>
</reference>
<reference key="2">
    <citation type="journal article" date="2000" name="Science">
        <title>The genome sequence of Drosophila melanogaster.</title>
        <authorList>
            <person name="Adams M.D."/>
            <person name="Celniker S.E."/>
            <person name="Holt R.A."/>
            <person name="Evans C.A."/>
            <person name="Gocayne J.D."/>
            <person name="Amanatides P.G."/>
            <person name="Scherer S.E."/>
            <person name="Li P.W."/>
            <person name="Hoskins R.A."/>
            <person name="Galle R.F."/>
            <person name="George R.A."/>
            <person name="Lewis S.E."/>
            <person name="Richards S."/>
            <person name="Ashburner M."/>
            <person name="Henderson S.N."/>
            <person name="Sutton G.G."/>
            <person name="Wortman J.R."/>
            <person name="Yandell M.D."/>
            <person name="Zhang Q."/>
            <person name="Chen L.X."/>
            <person name="Brandon R.C."/>
            <person name="Rogers Y.-H.C."/>
            <person name="Blazej R.G."/>
            <person name="Champe M."/>
            <person name="Pfeiffer B.D."/>
            <person name="Wan K.H."/>
            <person name="Doyle C."/>
            <person name="Baxter E.G."/>
            <person name="Helt G."/>
            <person name="Nelson C.R."/>
            <person name="Miklos G.L.G."/>
            <person name="Abril J.F."/>
            <person name="Agbayani A."/>
            <person name="An H.-J."/>
            <person name="Andrews-Pfannkoch C."/>
            <person name="Baldwin D."/>
            <person name="Ballew R.M."/>
            <person name="Basu A."/>
            <person name="Baxendale J."/>
            <person name="Bayraktaroglu L."/>
            <person name="Beasley E.M."/>
            <person name="Beeson K.Y."/>
            <person name="Benos P.V."/>
            <person name="Berman B.P."/>
            <person name="Bhandari D."/>
            <person name="Bolshakov S."/>
            <person name="Borkova D."/>
            <person name="Botchan M.R."/>
            <person name="Bouck J."/>
            <person name="Brokstein P."/>
            <person name="Brottier P."/>
            <person name="Burtis K.C."/>
            <person name="Busam D.A."/>
            <person name="Butler H."/>
            <person name="Cadieu E."/>
            <person name="Center A."/>
            <person name="Chandra I."/>
            <person name="Cherry J.M."/>
            <person name="Cawley S."/>
            <person name="Dahlke C."/>
            <person name="Davenport L.B."/>
            <person name="Davies P."/>
            <person name="de Pablos B."/>
            <person name="Delcher A."/>
            <person name="Deng Z."/>
            <person name="Mays A.D."/>
            <person name="Dew I."/>
            <person name="Dietz S.M."/>
            <person name="Dodson K."/>
            <person name="Doup L.E."/>
            <person name="Downes M."/>
            <person name="Dugan-Rocha S."/>
            <person name="Dunkov B.C."/>
            <person name="Dunn P."/>
            <person name="Durbin K.J."/>
            <person name="Evangelista C.C."/>
            <person name="Ferraz C."/>
            <person name="Ferriera S."/>
            <person name="Fleischmann W."/>
            <person name="Fosler C."/>
            <person name="Gabrielian A.E."/>
            <person name="Garg N.S."/>
            <person name="Gelbart W.M."/>
            <person name="Glasser K."/>
            <person name="Glodek A."/>
            <person name="Gong F."/>
            <person name="Gorrell J.H."/>
            <person name="Gu Z."/>
            <person name="Guan P."/>
            <person name="Harris M."/>
            <person name="Harris N.L."/>
            <person name="Harvey D.A."/>
            <person name="Heiman T.J."/>
            <person name="Hernandez J.R."/>
            <person name="Houck J."/>
            <person name="Hostin D."/>
            <person name="Houston K.A."/>
            <person name="Howland T.J."/>
            <person name="Wei M.-H."/>
            <person name="Ibegwam C."/>
            <person name="Jalali M."/>
            <person name="Kalush F."/>
            <person name="Karpen G.H."/>
            <person name="Ke Z."/>
            <person name="Kennison J.A."/>
            <person name="Ketchum K.A."/>
            <person name="Kimmel B.E."/>
            <person name="Kodira C.D."/>
            <person name="Kraft C.L."/>
            <person name="Kravitz S."/>
            <person name="Kulp D."/>
            <person name="Lai Z."/>
            <person name="Lasko P."/>
            <person name="Lei Y."/>
            <person name="Levitsky A.A."/>
            <person name="Li J.H."/>
            <person name="Li Z."/>
            <person name="Liang Y."/>
            <person name="Lin X."/>
            <person name="Liu X."/>
            <person name="Mattei B."/>
            <person name="McIntosh T.C."/>
            <person name="McLeod M.P."/>
            <person name="McPherson D."/>
            <person name="Merkulov G."/>
            <person name="Milshina N.V."/>
            <person name="Mobarry C."/>
            <person name="Morris J."/>
            <person name="Moshrefi A."/>
            <person name="Mount S.M."/>
            <person name="Moy M."/>
            <person name="Murphy B."/>
            <person name="Murphy L."/>
            <person name="Muzny D.M."/>
            <person name="Nelson D.L."/>
            <person name="Nelson D.R."/>
            <person name="Nelson K.A."/>
            <person name="Nixon K."/>
            <person name="Nusskern D.R."/>
            <person name="Pacleb J.M."/>
            <person name="Palazzolo M."/>
            <person name="Pittman G.S."/>
            <person name="Pan S."/>
            <person name="Pollard J."/>
            <person name="Puri V."/>
            <person name="Reese M.G."/>
            <person name="Reinert K."/>
            <person name="Remington K."/>
            <person name="Saunders R.D.C."/>
            <person name="Scheeler F."/>
            <person name="Shen H."/>
            <person name="Shue B.C."/>
            <person name="Siden-Kiamos I."/>
            <person name="Simpson M."/>
            <person name="Skupski M.P."/>
            <person name="Smith T.J."/>
            <person name="Spier E."/>
            <person name="Spradling A.C."/>
            <person name="Stapleton M."/>
            <person name="Strong R."/>
            <person name="Sun E."/>
            <person name="Svirskas R."/>
            <person name="Tector C."/>
            <person name="Turner R."/>
            <person name="Venter E."/>
            <person name="Wang A.H."/>
            <person name="Wang X."/>
            <person name="Wang Z.-Y."/>
            <person name="Wassarman D.A."/>
            <person name="Weinstock G.M."/>
            <person name="Weissenbach J."/>
            <person name="Williams S.M."/>
            <person name="Woodage T."/>
            <person name="Worley K.C."/>
            <person name="Wu D."/>
            <person name="Yang S."/>
            <person name="Yao Q.A."/>
            <person name="Ye J."/>
            <person name="Yeh R.-F."/>
            <person name="Zaveri J.S."/>
            <person name="Zhan M."/>
            <person name="Zhang G."/>
            <person name="Zhao Q."/>
            <person name="Zheng L."/>
            <person name="Zheng X.H."/>
            <person name="Zhong F.N."/>
            <person name="Zhong W."/>
            <person name="Zhou X."/>
            <person name="Zhu S.C."/>
            <person name="Zhu X."/>
            <person name="Smith H.O."/>
            <person name="Gibbs R.A."/>
            <person name="Myers E.W."/>
            <person name="Rubin G.M."/>
            <person name="Venter J.C."/>
        </authorList>
    </citation>
    <scope>NUCLEOTIDE SEQUENCE [LARGE SCALE GENOMIC DNA]</scope>
    <source>
        <strain>Berkeley</strain>
    </source>
</reference>
<reference key="3">
    <citation type="journal article" date="2002" name="Genome Biol.">
        <title>Annotation of the Drosophila melanogaster euchromatic genome: a systematic review.</title>
        <authorList>
            <person name="Misra S."/>
            <person name="Crosby M.A."/>
            <person name="Mungall C.J."/>
            <person name="Matthews B.B."/>
            <person name="Campbell K.S."/>
            <person name="Hradecky P."/>
            <person name="Huang Y."/>
            <person name="Kaminker J.S."/>
            <person name="Millburn G.H."/>
            <person name="Prochnik S.E."/>
            <person name="Smith C.D."/>
            <person name="Tupy J.L."/>
            <person name="Whitfield E.J."/>
            <person name="Bayraktaroglu L."/>
            <person name="Berman B.P."/>
            <person name="Bettencourt B.R."/>
            <person name="Celniker S.E."/>
            <person name="de Grey A.D.N.J."/>
            <person name="Drysdale R.A."/>
            <person name="Harris N.L."/>
            <person name="Richter J."/>
            <person name="Russo S."/>
            <person name="Schroeder A.J."/>
            <person name="Shu S.Q."/>
            <person name="Stapleton M."/>
            <person name="Yamada C."/>
            <person name="Ashburner M."/>
            <person name="Gelbart W.M."/>
            <person name="Rubin G.M."/>
            <person name="Lewis S.E."/>
        </authorList>
    </citation>
    <scope>GENOME REANNOTATION</scope>
    <source>
        <strain>Berkeley</strain>
    </source>
</reference>
<reference key="4">
    <citation type="journal article" date="1998" name="Biochem. Biophys. Res. Commun.">
        <title>Regulation of the Drosophila bHLH-PAS protein Sima by hypoxia: functional evidence for homology with mammalian HIF-1 alpha.</title>
        <authorList>
            <person name="Bacon N.C."/>
            <person name="Wappner P."/>
            <person name="O'Rourke J.F."/>
            <person name="Bartlett S.M."/>
            <person name="Shilo B."/>
            <person name="Pugh C.W."/>
            <person name="Ratcliffe P.J."/>
        </authorList>
    </citation>
    <scope>FUNCTION</scope>
    <scope>INDUCTION</scope>
</reference>
<reference key="5">
    <citation type="journal article" date="2000" name="Biochem. Biophys. Res. Commun.">
        <title>Drosophila von Hippel-Lindau tumor suppressor complex possesses E3 ubiquitin ligase activity.</title>
        <authorList>
            <person name="Aso T."/>
            <person name="Yamazaki K."/>
            <person name="Aigaki T."/>
            <person name="Kitajima S."/>
        </authorList>
    </citation>
    <scope>INTERACTION WITH VHL</scope>
</reference>
<reference key="6">
    <citation type="journal article" date="2002" name="Mol. Cell. Biol.">
        <title>Control of the hypoxic response in Drosophila melanogaster by the basic helix-loop-helix PAS protein similar.</title>
        <authorList>
            <person name="Lavista-Llanos S."/>
            <person name="Centanin L."/>
            <person name="Irisarri M."/>
            <person name="Russo D.M."/>
            <person name="Gleadle J.M."/>
            <person name="Bocca S.N."/>
            <person name="Muzzopappa M."/>
            <person name="Ratcliffe P.J."/>
            <person name="Wappner P."/>
        </authorList>
    </citation>
    <scope>FUNCTION</scope>
    <scope>SUBCELLULAR LOCATION</scope>
    <scope>INDUCTION</scope>
    <scope>ODD DOMAIN</scope>
</reference>
<comment type="function">
    <text evidence="6 8">Functions as a transcriptional regulator of the adaptive response to hypoxia. Binds to core DNA sequence 5'-[AG]CGTG-3' within the hypoxia response element (HRE) of target gene promoters.</text>
</comment>
<comment type="subunit">
    <text evidence="5">Efficient DNA binding requires dimerization with another bHLH protein. Interacts with Vhl.</text>
</comment>
<comment type="subcellular location">
    <subcellularLocation>
        <location evidence="6">Cytoplasm</location>
    </subcellularLocation>
    <subcellularLocation>
        <location evidence="3 6">Nucleus</location>
    </subcellularLocation>
    <text>Cytoplasmic in normoxia, nuclear translocation in response to hypoxia.</text>
</comment>
<comment type="tissue specificity">
    <text evidence="7">Ubiquitously expressed in the embryo.</text>
</comment>
<comment type="induction">
    <text evidence="6 8">By hypoxia.</text>
</comment>
<comment type="domain">
    <text>The oxygen-dependent degradation (ODD) domain is required for cytoplasmic localization in normoxia.</text>
</comment>
<sequence length="1507" mass="165824">MVSLIDTIEAAAEKQKQSQAVVTNTSASSSSCSSSFSSSPPSSSVGSPSPGAPKTNLTASGKPKEKRRNNEKRKEKSRDAARCRRSKETEIFMELSAALPLKTDDVNQLDKASVMRITIAFLKIREMLQFVPSLRDCNDDIKQDIETAEDQQEVKPKLEVGTEDWLNGAEARELLKQTMDGFLLVLSHEGDITYVSENVVEYLGITKIDTLGQQIWEYSHQCDHAEIKEALSLKRELAQKVKDEPQQNSGVSTHHRDLFVRLKCTLTSRGRSINIKSASYKVIHITGHLVVNAKGERLLMAIGRPIPHPSNIEIPLGTSTFLTKHSLDMRFTYVDDKMHDLLGYSPKDLLDTSLFSCQHGADSERLMATFKSVLSKGQGETSRYRFLGKYGGYCWILSQATIVYDKLKPQSVVCVNYVISNLENKHEIYSLAQQTAASEQKEQHHQAAETEKEPEKAADPEIIAQETKETVNTPIHTSELQAKPLQLESEKAEKTIEETKTIATIPPVTATSTADQIKQLPESNPYKQILQAELLIKRENHSPGPRTITAQLLSGSSSGLRPEEKRPKSVTASVLRPSPAPPLTPPPTAVLCKKTPLGVEPNLPPTTTATAAIISSSNQQLQIAQQTQLQNPQQPAQDMSKGFCSLFADDGRGLTMLKEEPDDLSHHLASTNCIQLDEMTPFSDMLVGLMGTCLLPEDINSLDSTTCSTTASGQHYQSPSSSSTSAPSNTSSSNNSYANSPLSPLTPNSTATASNPSHQQQQQHHNQQQQQQQQQQHHPQHHDNSNSSSNIDPLFNYREESNDTSCSQHLHSPSITSKSPEDSSLPSLCSPNSLTQEDDFSFEAFAMRAPYIPIDDDMPLLTETDLMWCPPEDLQTMVPKEIDAIQQQLQQLQQQHHQQYAGNTGYQQQQQQPQLQQQHFSNSLCSSPASTVSSLSPSPVQQHHQQQQAAVFTSDSSELAALLCGSGNGTLSILAGSGVTVAEECNERLQQHQQQQQQTSGNEFRTFQQLQQELQLQEEQQQRQQQQQQQQQQQQQQQLLSLNIECKKEKYDVQMGGSLCHPMEDAFENDYSKDSANLDCWDLIQMQVVDTEPVSPNAASPTPCKVSAIQLLQQQQQLQQQQQQQQNIILNAVPLITIQNNKELMQQQQQQQQQQQQEQLQQPAIKLLNGASIAPVNTKATIRLVESKPPTTTQSRMAKVNLVPQQQQHGNKRHLNSATGAGNPVESKRLKSGTLCLDVQSPQLLQQLIGKDPAQQQTQAAKRAGSERWQLSAESKQQKQQQQQSNSVLKNLLVSGRDDDDSEAMIIDEDNSLVQPIPLGKYGLPLHCHTSTSSVLRDYHNNPLISGTNFQLSPVFGGSDSSGGDGETGSVVSLDDSVPPGLTACDTDASSDSGIDENSLMDGASGSPRKRLSSTSNSTNQAESAPPALDVETPVTQKSVEEEFEGGGSGSNAPSRKTSISFLDSSNPLLHTPAMMDLVNDDYIMGEGGFEFSDNQLEQVLGWPEIA</sequence>
<accession>Q24167</accession>
<accession>Q9VAA5</accession>
<keyword id="KW-0010">Activator</keyword>
<keyword id="KW-0175">Coiled coil</keyword>
<keyword id="KW-0963">Cytoplasm</keyword>
<keyword id="KW-0238">DNA-binding</keyword>
<keyword id="KW-0539">Nucleus</keyword>
<keyword id="KW-1185">Reference proteome</keyword>
<keyword id="KW-0677">Repeat</keyword>
<keyword id="KW-0804">Transcription</keyword>
<keyword id="KW-0805">Transcription regulation</keyword>
<dbReference type="EMBL" id="U43090">
    <property type="protein sequence ID" value="AAC47303.1"/>
    <property type="molecule type" value="mRNA"/>
</dbReference>
<dbReference type="EMBL" id="AE014297">
    <property type="protein sequence ID" value="AAF57008.2"/>
    <property type="molecule type" value="Genomic_DNA"/>
</dbReference>
<dbReference type="PIR" id="JC4851">
    <property type="entry name" value="JC4851"/>
</dbReference>
<dbReference type="RefSeq" id="NP_524584.2">
    <property type="nucleotide sequence ID" value="NM_079845.4"/>
</dbReference>
<dbReference type="SMR" id="Q24167"/>
<dbReference type="BioGRID" id="68436">
    <property type="interactions" value="207"/>
</dbReference>
<dbReference type="ComplexPortal" id="CPX-2691">
    <property type="entry name" value="Hypoxia-inducible transcription factor complex"/>
</dbReference>
<dbReference type="DIP" id="DIP-21002N"/>
<dbReference type="ELM" id="Q24167"/>
<dbReference type="FunCoup" id="Q24167">
    <property type="interactions" value="455"/>
</dbReference>
<dbReference type="IntAct" id="Q24167">
    <property type="interactions" value="5"/>
</dbReference>
<dbReference type="STRING" id="7227.FBpp0310749"/>
<dbReference type="GlyGen" id="Q24167">
    <property type="glycosylation" value="1 site"/>
</dbReference>
<dbReference type="PaxDb" id="7227-FBpp0084931"/>
<dbReference type="EnsemblMetazoa" id="FBtr0344374">
    <property type="protein sequence ID" value="FBpp0310747"/>
    <property type="gene ID" value="FBgn0266411"/>
</dbReference>
<dbReference type="GeneID" id="43580"/>
<dbReference type="KEGG" id="dme:Dmel_CG45051"/>
<dbReference type="AGR" id="FB:FBgn0266411"/>
<dbReference type="CTD" id="43580"/>
<dbReference type="FlyBase" id="FBgn0266411">
    <property type="gene designation" value="sima"/>
</dbReference>
<dbReference type="VEuPathDB" id="VectorBase:FBgn0266411"/>
<dbReference type="eggNOG" id="KOG3558">
    <property type="taxonomic scope" value="Eukaryota"/>
</dbReference>
<dbReference type="HOGENOM" id="CLU_004124_0_0_1"/>
<dbReference type="InParanoid" id="Q24167"/>
<dbReference type="OrthoDB" id="6021714at2759"/>
<dbReference type="PhylomeDB" id="Q24167"/>
<dbReference type="Reactome" id="R-DME-1234158">
    <property type="pathway name" value="Regulation of gene expression by Hypoxia-inducible Factor"/>
</dbReference>
<dbReference type="Reactome" id="R-DME-1234176">
    <property type="pathway name" value="Oxygen-dependent proline hydroxylation of Hypoxia-inducible Factor Alpha"/>
</dbReference>
<dbReference type="Reactome" id="R-DME-8951664">
    <property type="pathway name" value="Neddylation"/>
</dbReference>
<dbReference type="SignaLink" id="Q24167"/>
<dbReference type="BioGRID-ORCS" id="43580">
    <property type="hits" value="0 hits in 3 CRISPR screens"/>
</dbReference>
<dbReference type="ChiTaRS" id="sima">
    <property type="organism name" value="fly"/>
</dbReference>
<dbReference type="GenomeRNAi" id="43580"/>
<dbReference type="PRO" id="PR:Q24167"/>
<dbReference type="Proteomes" id="UP000000803">
    <property type="component" value="Chromosome 3R"/>
</dbReference>
<dbReference type="Bgee" id="FBgn0266411">
    <property type="expression patterns" value="Expressed in adult oenocyte (Drosophila) in dorsal vessel heart and 281 other cell types or tissues"/>
</dbReference>
<dbReference type="ExpressionAtlas" id="Q24167">
    <property type="expression patterns" value="baseline and differential"/>
</dbReference>
<dbReference type="GO" id="GO:0005829">
    <property type="term" value="C:cytosol"/>
    <property type="evidence" value="ECO:0000314"/>
    <property type="project" value="FlyBase"/>
</dbReference>
<dbReference type="GO" id="GO:0005634">
    <property type="term" value="C:nucleus"/>
    <property type="evidence" value="ECO:0000314"/>
    <property type="project" value="FlyBase"/>
</dbReference>
<dbReference type="GO" id="GO:0090575">
    <property type="term" value="C:RNA polymerase II transcription regulator complex"/>
    <property type="evidence" value="ECO:0000315"/>
    <property type="project" value="FlyBase"/>
</dbReference>
<dbReference type="GO" id="GO:0001228">
    <property type="term" value="F:DNA-binding transcription activator activity, RNA polymerase II-specific"/>
    <property type="evidence" value="ECO:0000314"/>
    <property type="project" value="FlyBase"/>
</dbReference>
<dbReference type="GO" id="GO:0000981">
    <property type="term" value="F:DNA-binding transcription factor activity, RNA polymerase II-specific"/>
    <property type="evidence" value="ECO:0000318"/>
    <property type="project" value="GO_Central"/>
</dbReference>
<dbReference type="GO" id="GO:0046983">
    <property type="term" value="F:protein dimerization activity"/>
    <property type="evidence" value="ECO:0007669"/>
    <property type="project" value="InterPro"/>
</dbReference>
<dbReference type="GO" id="GO:0000977">
    <property type="term" value="F:RNA polymerase II transcription regulatory region sequence-specific DNA binding"/>
    <property type="evidence" value="ECO:0000318"/>
    <property type="project" value="GO_Central"/>
</dbReference>
<dbReference type="GO" id="GO:0071456">
    <property type="term" value="P:cellular response to hypoxia"/>
    <property type="evidence" value="ECO:0000314"/>
    <property type="project" value="FlyBase"/>
</dbReference>
<dbReference type="GO" id="GO:0032869">
    <property type="term" value="P:cellular response to insulin stimulus"/>
    <property type="evidence" value="ECO:0000314"/>
    <property type="project" value="FlyBase"/>
</dbReference>
<dbReference type="GO" id="GO:0008286">
    <property type="term" value="P:insulin receptor signaling pathway"/>
    <property type="evidence" value="ECO:0000315"/>
    <property type="project" value="FlyBase"/>
</dbReference>
<dbReference type="GO" id="GO:0030308">
    <property type="term" value="P:negative regulation of cell growth"/>
    <property type="evidence" value="ECO:0000315"/>
    <property type="project" value="FlyBase"/>
</dbReference>
<dbReference type="GO" id="GO:0048477">
    <property type="term" value="P:oogenesis"/>
    <property type="evidence" value="ECO:0000315"/>
    <property type="project" value="FlyBase"/>
</dbReference>
<dbReference type="GO" id="GO:0010628">
    <property type="term" value="P:positive regulation of gene expression"/>
    <property type="evidence" value="ECO:0000315"/>
    <property type="project" value="FlyBase"/>
</dbReference>
<dbReference type="GO" id="GO:0045821">
    <property type="term" value="P:positive regulation of glycolytic process"/>
    <property type="evidence" value="ECO:0000315"/>
    <property type="project" value="FlyBase"/>
</dbReference>
<dbReference type="GO" id="GO:0016239">
    <property type="term" value="P:positive regulation of macroautophagy"/>
    <property type="evidence" value="ECO:0000315"/>
    <property type="project" value="FlyBase"/>
</dbReference>
<dbReference type="GO" id="GO:0045944">
    <property type="term" value="P:positive regulation of transcription by RNA polymerase II"/>
    <property type="evidence" value="ECO:0000315"/>
    <property type="project" value="FlyBase"/>
</dbReference>
<dbReference type="GO" id="GO:0030334">
    <property type="term" value="P:regulation of cell migration"/>
    <property type="evidence" value="ECO:0000315"/>
    <property type="project" value="FlyBase"/>
</dbReference>
<dbReference type="GO" id="GO:0006355">
    <property type="term" value="P:regulation of DNA-templated transcription"/>
    <property type="evidence" value="ECO:0000250"/>
    <property type="project" value="FlyBase"/>
</dbReference>
<dbReference type="GO" id="GO:0045088">
    <property type="term" value="P:regulation of innate immune response"/>
    <property type="evidence" value="ECO:0000315"/>
    <property type="project" value="FlyBase"/>
</dbReference>
<dbReference type="GO" id="GO:0006357">
    <property type="term" value="P:regulation of transcription by RNA polymerase II"/>
    <property type="evidence" value="ECO:0000318"/>
    <property type="project" value="GO_Central"/>
</dbReference>
<dbReference type="GO" id="GO:0060438">
    <property type="term" value="P:trachea development"/>
    <property type="evidence" value="ECO:0000315"/>
    <property type="project" value="FlyBase"/>
</dbReference>
<dbReference type="CDD" id="cd11433">
    <property type="entry name" value="bHLH-PAS_HIF"/>
    <property type="match status" value="1"/>
</dbReference>
<dbReference type="CDD" id="cd00130">
    <property type="entry name" value="PAS"/>
    <property type="match status" value="2"/>
</dbReference>
<dbReference type="FunFam" id="3.30.450.20:FF:000101">
    <property type="entry name" value="Similar, isoform B"/>
    <property type="match status" value="1"/>
</dbReference>
<dbReference type="FunFam" id="3.30.450.20:FF:000141">
    <property type="entry name" value="Similar, isoform D"/>
    <property type="match status" value="1"/>
</dbReference>
<dbReference type="Gene3D" id="3.30.450.20">
    <property type="entry name" value="PAS domain"/>
    <property type="match status" value="2"/>
</dbReference>
<dbReference type="InterPro" id="IPR011598">
    <property type="entry name" value="bHLH_dom"/>
</dbReference>
<dbReference type="InterPro" id="IPR036638">
    <property type="entry name" value="HLH_DNA-bd_sf"/>
</dbReference>
<dbReference type="InterPro" id="IPR001610">
    <property type="entry name" value="PAC"/>
</dbReference>
<dbReference type="InterPro" id="IPR000014">
    <property type="entry name" value="PAS"/>
</dbReference>
<dbReference type="InterPro" id="IPR035965">
    <property type="entry name" value="PAS-like_dom_sf"/>
</dbReference>
<dbReference type="InterPro" id="IPR013767">
    <property type="entry name" value="PAS_fold"/>
</dbReference>
<dbReference type="InterPro" id="IPR013655">
    <property type="entry name" value="PAS_fold_3"/>
</dbReference>
<dbReference type="PANTHER" id="PTHR23043">
    <property type="entry name" value="HYPOXIA-INDUCIBLE FACTOR 1 ALPHA"/>
    <property type="match status" value="1"/>
</dbReference>
<dbReference type="PANTHER" id="PTHR23043:SF17">
    <property type="entry name" value="PROTEIN SIMILAR"/>
    <property type="match status" value="1"/>
</dbReference>
<dbReference type="Pfam" id="PF23171">
    <property type="entry name" value="bHLH_HIF1A"/>
    <property type="match status" value="1"/>
</dbReference>
<dbReference type="Pfam" id="PF00989">
    <property type="entry name" value="PAS"/>
    <property type="match status" value="1"/>
</dbReference>
<dbReference type="Pfam" id="PF08447">
    <property type="entry name" value="PAS_3"/>
    <property type="match status" value="1"/>
</dbReference>
<dbReference type="SMART" id="SM00353">
    <property type="entry name" value="HLH"/>
    <property type="match status" value="1"/>
</dbReference>
<dbReference type="SMART" id="SM00086">
    <property type="entry name" value="PAC"/>
    <property type="match status" value="1"/>
</dbReference>
<dbReference type="SMART" id="SM00091">
    <property type="entry name" value="PAS"/>
    <property type="match status" value="2"/>
</dbReference>
<dbReference type="SUPFAM" id="SSF47459">
    <property type="entry name" value="HLH, helix-loop-helix DNA-binding domain"/>
    <property type="match status" value="1"/>
</dbReference>
<dbReference type="SUPFAM" id="SSF55785">
    <property type="entry name" value="PYP-like sensor domain (PAS domain)"/>
    <property type="match status" value="2"/>
</dbReference>
<dbReference type="PROSITE" id="PS50888">
    <property type="entry name" value="BHLH"/>
    <property type="match status" value="1"/>
</dbReference>
<dbReference type="PROSITE" id="PS50112">
    <property type="entry name" value="PAS"/>
    <property type="match status" value="2"/>
</dbReference>
<gene>
    <name type="primary">sima</name>
    <name type="ORF">CG45051</name>
</gene>
<evidence type="ECO:0000255" key="1"/>
<evidence type="ECO:0000255" key="2">
    <source>
        <dbReference type="PROSITE-ProRule" id="PRU00140"/>
    </source>
</evidence>
<evidence type="ECO:0000255" key="3">
    <source>
        <dbReference type="PROSITE-ProRule" id="PRU00981"/>
    </source>
</evidence>
<evidence type="ECO:0000256" key="4">
    <source>
        <dbReference type="SAM" id="MobiDB-lite"/>
    </source>
</evidence>
<evidence type="ECO:0000269" key="5">
    <source>
    </source>
</evidence>
<evidence type="ECO:0000269" key="6">
    <source>
    </source>
</evidence>
<evidence type="ECO:0000269" key="7">
    <source>
    </source>
</evidence>
<evidence type="ECO:0000269" key="8">
    <source>
    </source>
</evidence>
<evidence type="ECO:0000305" key="9"/>
<proteinExistence type="evidence at protein level"/>
<feature type="chain" id="PRO_0000127444" description="Protein similar">
    <location>
        <begin position="1"/>
        <end position="1507"/>
    </location>
</feature>
<feature type="domain" description="bHLH" evidence="3">
    <location>
        <begin position="72"/>
        <end position="125"/>
    </location>
</feature>
<feature type="domain" description="PAS 1" evidence="2">
    <location>
        <begin position="167"/>
        <end position="240"/>
    </location>
</feature>
<feature type="domain" description="PAS 2" evidence="2">
    <location>
        <begin position="307"/>
        <end position="377"/>
    </location>
</feature>
<feature type="domain" description="PAC">
    <location>
        <begin position="381"/>
        <end position="422"/>
    </location>
</feature>
<feature type="region of interest" description="Disordered" evidence="4">
    <location>
        <begin position="1"/>
        <end position="85"/>
    </location>
</feature>
<feature type="region of interest" description="Disordered" evidence="4">
    <location>
        <begin position="433"/>
        <end position="459"/>
    </location>
</feature>
<feature type="region of interest" description="Disordered" evidence="4">
    <location>
        <begin position="541"/>
        <end position="588"/>
    </location>
</feature>
<feature type="region of interest" description="ODD">
    <location>
        <begin position="692"/>
        <end position="863"/>
    </location>
</feature>
<feature type="region of interest" description="Disordered" evidence="4">
    <location>
        <begin position="706"/>
        <end position="832"/>
    </location>
</feature>
<feature type="region of interest" description="Disordered" evidence="4">
    <location>
        <begin position="900"/>
        <end position="951"/>
    </location>
</feature>
<feature type="region of interest" description="Disordered" evidence="4">
    <location>
        <begin position="1204"/>
        <end position="1228"/>
    </location>
</feature>
<feature type="region of interest" description="Disordered" evidence="4">
    <location>
        <begin position="1251"/>
        <end position="1287"/>
    </location>
</feature>
<feature type="region of interest" description="Disordered" evidence="4">
    <location>
        <begin position="1356"/>
        <end position="1460"/>
    </location>
</feature>
<feature type="coiled-coil region" evidence="1">
    <location>
        <begin position="880"/>
        <end position="908"/>
    </location>
</feature>
<feature type="coiled-coil region" evidence="1">
    <location>
        <begin position="982"/>
        <end position="1054"/>
    </location>
</feature>
<feature type="coiled-coil region" evidence="1">
    <location>
        <begin position="1110"/>
        <end position="1162"/>
    </location>
</feature>
<feature type="compositionally biased region" description="Low complexity" evidence="4">
    <location>
        <begin position="26"/>
        <end position="49"/>
    </location>
</feature>
<feature type="compositionally biased region" description="Basic and acidic residues" evidence="4">
    <location>
        <begin position="72"/>
        <end position="85"/>
    </location>
</feature>
<feature type="compositionally biased region" description="Basic and acidic residues" evidence="4">
    <location>
        <begin position="439"/>
        <end position="459"/>
    </location>
</feature>
<feature type="compositionally biased region" description="Polar residues" evidence="4">
    <location>
        <begin position="548"/>
        <end position="559"/>
    </location>
</feature>
<feature type="compositionally biased region" description="Pro residues" evidence="4">
    <location>
        <begin position="578"/>
        <end position="588"/>
    </location>
</feature>
<feature type="compositionally biased region" description="Polar residues" evidence="4">
    <location>
        <begin position="706"/>
        <end position="717"/>
    </location>
</feature>
<feature type="compositionally biased region" description="Low complexity" evidence="4">
    <location>
        <begin position="718"/>
        <end position="745"/>
    </location>
</feature>
<feature type="compositionally biased region" description="Low complexity" evidence="4">
    <location>
        <begin position="754"/>
        <end position="777"/>
    </location>
</feature>
<feature type="compositionally biased region" description="Polar residues" evidence="4">
    <location>
        <begin position="803"/>
        <end position="818"/>
    </location>
</feature>
<feature type="compositionally biased region" description="Low complexity" evidence="4">
    <location>
        <begin position="823"/>
        <end position="832"/>
    </location>
</feature>
<feature type="compositionally biased region" description="Low complexity" evidence="4">
    <location>
        <begin position="907"/>
        <end position="918"/>
    </location>
</feature>
<feature type="compositionally biased region" description="Low complexity" evidence="4">
    <location>
        <begin position="926"/>
        <end position="951"/>
    </location>
</feature>
<feature type="compositionally biased region" description="Polar residues" evidence="4">
    <location>
        <begin position="1413"/>
        <end position="1423"/>
    </location>
</feature>
<feature type="sequence conflict" description="In Ref. 1; AAC47303." evidence="9" ref="1">
    <original>S</original>
    <variation>A</variation>
    <location>
        <position position="38"/>
    </location>
</feature>
<feature type="sequence conflict" description="In Ref. 1; AAC47303." evidence="9" ref="1">
    <original>S</original>
    <variation>L</variation>
    <location>
        <position position="345"/>
    </location>
</feature>
<feature type="sequence conflict" description="In Ref. 1; AAC47303." evidence="9" ref="1">
    <original>A</original>
    <variation>V</variation>
    <location>
        <position position="492"/>
    </location>
</feature>
<feature type="sequence conflict" description="In Ref. 1; AAC47303." evidence="9" ref="1">
    <original>T</original>
    <variation>I</variation>
    <location>
        <position position="588"/>
    </location>
</feature>
<feature type="sequence conflict" description="In Ref. 1; AAC47303." evidence="9" ref="1">
    <original>T</original>
    <variation>K</variation>
    <location>
        <position position="709"/>
    </location>
</feature>
<feature type="sequence conflict" description="In Ref. 1; AAC47303." evidence="9" ref="1">
    <original>Q</original>
    <variation>QQQQ</variation>
    <location>
        <position position="776"/>
    </location>
</feature>
<feature type="sequence conflict" description="In Ref. 1; AAC47303." evidence="9" ref="1">
    <original>Q</original>
    <variation>QQ</variation>
    <location>
        <position position="895"/>
    </location>
</feature>
<feature type="sequence conflict" description="In Ref. 1; AAC47303." evidence="9" ref="1">
    <original>G</original>
    <variation>S</variation>
    <location>
        <position position="902"/>
    </location>
</feature>
<feature type="sequence conflict" description="In Ref. 1; AAC47303." evidence="9" ref="1">
    <original>A</original>
    <variation>T</variation>
    <location>
        <position position="982"/>
    </location>
</feature>
<feature type="sequence conflict" description="In Ref. 1; AAC47303." evidence="9" ref="1">
    <location>
        <begin position="1125"/>
        <end position="1126"/>
    </location>
</feature>
<feature type="sequence conflict" description="In Ref. 1; AAC47303." evidence="9" ref="1">
    <location>
        <begin position="1154"/>
        <end position="1157"/>
    </location>
</feature>
<feature type="sequence conflict" description="In Ref. 1; AAC47303." evidence="9" ref="1">
    <original>F</original>
    <variation>L</variation>
    <location>
        <position position="1444"/>
    </location>
</feature>
<feature type="sequence conflict" description="In Ref. 1; AAC47303." evidence="9" ref="1">
    <original>G</original>
    <variation>C</variation>
    <location>
        <position position="1447"/>
    </location>
</feature>
<feature type="sequence conflict" description="In Ref. 1; AAC47303." evidence="9" ref="1">
    <original>S</original>
    <variation>N</variation>
    <location>
        <position position="1451"/>
    </location>
</feature>
<feature type="sequence conflict" description="In Ref. 1; AAC47303." evidence="9" ref="1">
    <original>D</original>
    <variation>G</variation>
    <location>
        <position position="1494"/>
    </location>
</feature>
<organism>
    <name type="scientific">Drosophila melanogaster</name>
    <name type="common">Fruit fly</name>
    <dbReference type="NCBI Taxonomy" id="7227"/>
    <lineage>
        <taxon>Eukaryota</taxon>
        <taxon>Metazoa</taxon>
        <taxon>Ecdysozoa</taxon>
        <taxon>Arthropoda</taxon>
        <taxon>Hexapoda</taxon>
        <taxon>Insecta</taxon>
        <taxon>Pterygota</taxon>
        <taxon>Neoptera</taxon>
        <taxon>Endopterygota</taxon>
        <taxon>Diptera</taxon>
        <taxon>Brachycera</taxon>
        <taxon>Muscomorpha</taxon>
        <taxon>Ephydroidea</taxon>
        <taxon>Drosophilidae</taxon>
        <taxon>Drosophila</taxon>
        <taxon>Sophophora</taxon>
    </lineage>
</organism>